<dbReference type="EC" id="2.7.7.38" evidence="1"/>
<dbReference type="EMBL" id="CP000964">
    <property type="protein sequence ID" value="ACI06619.1"/>
    <property type="molecule type" value="Genomic_DNA"/>
</dbReference>
<dbReference type="SMR" id="B5XY79"/>
<dbReference type="KEGG" id="kpe:KPK_3614"/>
<dbReference type="HOGENOM" id="CLU_065038_1_0_6"/>
<dbReference type="UniPathway" id="UPA00030"/>
<dbReference type="UniPathway" id="UPA00358">
    <property type="reaction ID" value="UER00476"/>
</dbReference>
<dbReference type="Proteomes" id="UP000001734">
    <property type="component" value="Chromosome"/>
</dbReference>
<dbReference type="GO" id="GO:0005829">
    <property type="term" value="C:cytosol"/>
    <property type="evidence" value="ECO:0007669"/>
    <property type="project" value="TreeGrafter"/>
</dbReference>
<dbReference type="GO" id="GO:0008690">
    <property type="term" value="F:3-deoxy-manno-octulosonate cytidylyltransferase activity"/>
    <property type="evidence" value="ECO:0007669"/>
    <property type="project" value="UniProtKB-UniRule"/>
</dbReference>
<dbReference type="GO" id="GO:0033468">
    <property type="term" value="P:CMP-keto-3-deoxy-D-manno-octulosonic acid biosynthetic process"/>
    <property type="evidence" value="ECO:0007669"/>
    <property type="project" value="UniProtKB-UniRule"/>
</dbReference>
<dbReference type="GO" id="GO:0009103">
    <property type="term" value="P:lipopolysaccharide biosynthetic process"/>
    <property type="evidence" value="ECO:0007669"/>
    <property type="project" value="UniProtKB-UniRule"/>
</dbReference>
<dbReference type="CDD" id="cd02517">
    <property type="entry name" value="CMP-KDO-Synthetase"/>
    <property type="match status" value="1"/>
</dbReference>
<dbReference type="FunFam" id="3.90.550.10:FF:000011">
    <property type="entry name" value="3-deoxy-manno-octulosonate cytidylyltransferase"/>
    <property type="match status" value="1"/>
</dbReference>
<dbReference type="Gene3D" id="3.90.550.10">
    <property type="entry name" value="Spore Coat Polysaccharide Biosynthesis Protein SpsA, Chain A"/>
    <property type="match status" value="1"/>
</dbReference>
<dbReference type="HAMAP" id="MF_00057">
    <property type="entry name" value="KdsB"/>
    <property type="match status" value="1"/>
</dbReference>
<dbReference type="InterPro" id="IPR003329">
    <property type="entry name" value="Cytidylyl_trans"/>
</dbReference>
<dbReference type="InterPro" id="IPR004528">
    <property type="entry name" value="KdsB"/>
</dbReference>
<dbReference type="InterPro" id="IPR029044">
    <property type="entry name" value="Nucleotide-diphossugar_trans"/>
</dbReference>
<dbReference type="NCBIfam" id="TIGR00466">
    <property type="entry name" value="kdsB"/>
    <property type="match status" value="1"/>
</dbReference>
<dbReference type="NCBIfam" id="NF003950">
    <property type="entry name" value="PRK05450.1-3"/>
    <property type="match status" value="1"/>
</dbReference>
<dbReference type="NCBIfam" id="NF003952">
    <property type="entry name" value="PRK05450.1-5"/>
    <property type="match status" value="1"/>
</dbReference>
<dbReference type="NCBIfam" id="NF009905">
    <property type="entry name" value="PRK13368.1"/>
    <property type="match status" value="1"/>
</dbReference>
<dbReference type="PANTHER" id="PTHR42866">
    <property type="entry name" value="3-DEOXY-MANNO-OCTULOSONATE CYTIDYLYLTRANSFERASE"/>
    <property type="match status" value="1"/>
</dbReference>
<dbReference type="PANTHER" id="PTHR42866:SF2">
    <property type="entry name" value="3-DEOXY-MANNO-OCTULOSONATE CYTIDYLYLTRANSFERASE, MITOCHONDRIAL"/>
    <property type="match status" value="1"/>
</dbReference>
<dbReference type="Pfam" id="PF02348">
    <property type="entry name" value="CTP_transf_3"/>
    <property type="match status" value="1"/>
</dbReference>
<dbReference type="SUPFAM" id="SSF53448">
    <property type="entry name" value="Nucleotide-diphospho-sugar transferases"/>
    <property type="match status" value="1"/>
</dbReference>
<feature type="chain" id="PRO_1000091881" description="3-deoxy-manno-octulosonate cytidylyltransferase">
    <location>
        <begin position="1"/>
        <end position="248"/>
    </location>
</feature>
<evidence type="ECO:0000255" key="1">
    <source>
        <dbReference type="HAMAP-Rule" id="MF_00057"/>
    </source>
</evidence>
<gene>
    <name evidence="1" type="primary">kdsB</name>
    <name type="ordered locus">KPK_3614</name>
</gene>
<comment type="function">
    <text evidence="1">Activates KDO (a required 8-carbon sugar) for incorporation into bacterial lipopolysaccharide in Gram-negative bacteria.</text>
</comment>
<comment type="catalytic activity">
    <reaction evidence="1">
        <text>3-deoxy-alpha-D-manno-oct-2-ulosonate + CTP = CMP-3-deoxy-beta-D-manno-octulosonate + diphosphate</text>
        <dbReference type="Rhea" id="RHEA:23448"/>
        <dbReference type="ChEBI" id="CHEBI:33019"/>
        <dbReference type="ChEBI" id="CHEBI:37563"/>
        <dbReference type="ChEBI" id="CHEBI:85986"/>
        <dbReference type="ChEBI" id="CHEBI:85987"/>
        <dbReference type="EC" id="2.7.7.38"/>
    </reaction>
</comment>
<comment type="pathway">
    <text evidence="1">Nucleotide-sugar biosynthesis; CMP-3-deoxy-D-manno-octulosonate biosynthesis; CMP-3-deoxy-D-manno-octulosonate from 3-deoxy-D-manno-octulosonate and CTP: step 1/1.</text>
</comment>
<comment type="pathway">
    <text evidence="1">Bacterial outer membrane biogenesis; lipopolysaccharide biosynthesis.</text>
</comment>
<comment type="subcellular location">
    <subcellularLocation>
        <location evidence="1">Cytoplasm</location>
    </subcellularLocation>
</comment>
<comment type="similarity">
    <text evidence="1">Belongs to the KdsB family.</text>
</comment>
<reference key="1">
    <citation type="journal article" date="2008" name="PLoS Genet.">
        <title>Complete genome sequence of the N2-fixing broad host range endophyte Klebsiella pneumoniae 342 and virulence predictions verified in mice.</title>
        <authorList>
            <person name="Fouts D.E."/>
            <person name="Tyler H.L."/>
            <person name="DeBoy R.T."/>
            <person name="Daugherty S."/>
            <person name="Ren Q."/>
            <person name="Badger J.H."/>
            <person name="Durkin A.S."/>
            <person name="Huot H."/>
            <person name="Shrivastava S."/>
            <person name="Kothari S."/>
            <person name="Dodson R.J."/>
            <person name="Mohamoud Y."/>
            <person name="Khouri H."/>
            <person name="Roesch L.F.W."/>
            <person name="Krogfelt K.A."/>
            <person name="Struve C."/>
            <person name="Triplett E.W."/>
            <person name="Methe B.A."/>
        </authorList>
    </citation>
    <scope>NUCLEOTIDE SEQUENCE [LARGE SCALE GENOMIC DNA]</scope>
    <source>
        <strain>342</strain>
    </source>
</reference>
<keyword id="KW-0963">Cytoplasm</keyword>
<keyword id="KW-0448">Lipopolysaccharide biosynthesis</keyword>
<keyword id="KW-0548">Nucleotidyltransferase</keyword>
<keyword id="KW-0808">Transferase</keyword>
<proteinExistence type="inferred from homology"/>
<sequence length="248" mass="27257">MSFVVIIPARFASTRLPGKPLQDINGKPMIVHVLERARESGADRIIVATDHPDVASAVEAAGGEVCMTRADHQSGTERLAEVVEKCAFSDDTIIVNIQGDEPMIPPAIVRQVAENLASSSSGMATLAVPIHDAEEAFNPNAVKVVMDAQGYALYFSRATIPWDRDRFAHSRETIGDSLLRHIGIYGYRAGFIRRYVSWAPSPLEQIEMLEQLRVLWYGEKIHVAVAAEVPGTGVDTPEDLERVRAELR</sequence>
<name>KDSB_KLEP3</name>
<accession>B5XY79</accession>
<protein>
    <recommendedName>
        <fullName evidence="1">3-deoxy-manno-octulosonate cytidylyltransferase</fullName>
        <ecNumber evidence="1">2.7.7.38</ecNumber>
    </recommendedName>
    <alternativeName>
        <fullName evidence="1">CMP-2-keto-3-deoxyoctulosonic acid synthase</fullName>
        <shortName evidence="1">CKS</shortName>
        <shortName evidence="1">CMP-KDO synthase</shortName>
    </alternativeName>
</protein>
<organism>
    <name type="scientific">Klebsiella pneumoniae (strain 342)</name>
    <dbReference type="NCBI Taxonomy" id="507522"/>
    <lineage>
        <taxon>Bacteria</taxon>
        <taxon>Pseudomonadati</taxon>
        <taxon>Pseudomonadota</taxon>
        <taxon>Gammaproteobacteria</taxon>
        <taxon>Enterobacterales</taxon>
        <taxon>Enterobacteriaceae</taxon>
        <taxon>Klebsiella/Raoultella group</taxon>
        <taxon>Klebsiella</taxon>
        <taxon>Klebsiella pneumoniae complex</taxon>
    </lineage>
</organism>